<gene>
    <name evidence="1" type="primary">rsmH</name>
    <name type="synonym">mraW</name>
    <name type="ordered locus">CTC_01635</name>
</gene>
<organism>
    <name type="scientific">Clostridium tetani (strain Massachusetts / E88)</name>
    <dbReference type="NCBI Taxonomy" id="212717"/>
    <lineage>
        <taxon>Bacteria</taxon>
        <taxon>Bacillati</taxon>
        <taxon>Bacillota</taxon>
        <taxon>Clostridia</taxon>
        <taxon>Eubacteriales</taxon>
        <taxon>Clostridiaceae</taxon>
        <taxon>Clostridium</taxon>
    </lineage>
</organism>
<proteinExistence type="inferred from homology"/>
<evidence type="ECO:0000255" key="1">
    <source>
        <dbReference type="HAMAP-Rule" id="MF_01007"/>
    </source>
</evidence>
<dbReference type="EC" id="2.1.1.199" evidence="1"/>
<dbReference type="EMBL" id="AE015927">
    <property type="protein sequence ID" value="AAO36178.1"/>
    <property type="molecule type" value="Genomic_DNA"/>
</dbReference>
<dbReference type="RefSeq" id="WP_011099838.1">
    <property type="nucleotide sequence ID" value="NC_004557.1"/>
</dbReference>
<dbReference type="SMR" id="Q894B4"/>
<dbReference type="STRING" id="212717.CTC_01635"/>
<dbReference type="GeneID" id="24253321"/>
<dbReference type="KEGG" id="ctc:CTC_01635"/>
<dbReference type="HOGENOM" id="CLU_038422_2_0_9"/>
<dbReference type="OrthoDB" id="9806637at2"/>
<dbReference type="Proteomes" id="UP000001412">
    <property type="component" value="Chromosome"/>
</dbReference>
<dbReference type="GO" id="GO:0005737">
    <property type="term" value="C:cytoplasm"/>
    <property type="evidence" value="ECO:0007669"/>
    <property type="project" value="UniProtKB-SubCell"/>
</dbReference>
<dbReference type="GO" id="GO:0071424">
    <property type="term" value="F:rRNA (cytosine-N4-)-methyltransferase activity"/>
    <property type="evidence" value="ECO:0007669"/>
    <property type="project" value="UniProtKB-UniRule"/>
</dbReference>
<dbReference type="GO" id="GO:0070475">
    <property type="term" value="P:rRNA base methylation"/>
    <property type="evidence" value="ECO:0007669"/>
    <property type="project" value="UniProtKB-UniRule"/>
</dbReference>
<dbReference type="FunFam" id="1.10.150.170:FF:000001">
    <property type="entry name" value="Ribosomal RNA small subunit methyltransferase H"/>
    <property type="match status" value="1"/>
</dbReference>
<dbReference type="Gene3D" id="1.10.150.170">
    <property type="entry name" value="Putative methyltransferase TM0872, insert domain"/>
    <property type="match status" value="1"/>
</dbReference>
<dbReference type="Gene3D" id="3.40.50.150">
    <property type="entry name" value="Vaccinia Virus protein VP39"/>
    <property type="match status" value="1"/>
</dbReference>
<dbReference type="HAMAP" id="MF_01007">
    <property type="entry name" value="16SrRNA_methyltr_H"/>
    <property type="match status" value="1"/>
</dbReference>
<dbReference type="InterPro" id="IPR002903">
    <property type="entry name" value="RsmH"/>
</dbReference>
<dbReference type="InterPro" id="IPR023397">
    <property type="entry name" value="SAM-dep_MeTrfase_MraW_recog"/>
</dbReference>
<dbReference type="InterPro" id="IPR029063">
    <property type="entry name" value="SAM-dependent_MTases_sf"/>
</dbReference>
<dbReference type="NCBIfam" id="TIGR00006">
    <property type="entry name" value="16S rRNA (cytosine(1402)-N(4))-methyltransferase RsmH"/>
    <property type="match status" value="1"/>
</dbReference>
<dbReference type="PANTHER" id="PTHR11265:SF0">
    <property type="entry name" value="12S RRNA N4-METHYLCYTIDINE METHYLTRANSFERASE"/>
    <property type="match status" value="1"/>
</dbReference>
<dbReference type="PANTHER" id="PTHR11265">
    <property type="entry name" value="S-ADENOSYL-METHYLTRANSFERASE MRAW"/>
    <property type="match status" value="1"/>
</dbReference>
<dbReference type="Pfam" id="PF01795">
    <property type="entry name" value="Methyltransf_5"/>
    <property type="match status" value="1"/>
</dbReference>
<dbReference type="PIRSF" id="PIRSF004486">
    <property type="entry name" value="MraW"/>
    <property type="match status" value="1"/>
</dbReference>
<dbReference type="SUPFAM" id="SSF81799">
    <property type="entry name" value="Putative methyltransferase TM0872, insert domain"/>
    <property type="match status" value="1"/>
</dbReference>
<dbReference type="SUPFAM" id="SSF53335">
    <property type="entry name" value="S-adenosyl-L-methionine-dependent methyltransferases"/>
    <property type="match status" value="1"/>
</dbReference>
<comment type="function">
    <text evidence="1">Specifically methylates the N4 position of cytidine in position 1402 (C1402) of 16S rRNA.</text>
</comment>
<comment type="catalytic activity">
    <reaction evidence="1">
        <text>cytidine(1402) in 16S rRNA + S-adenosyl-L-methionine = N(4)-methylcytidine(1402) in 16S rRNA + S-adenosyl-L-homocysteine + H(+)</text>
        <dbReference type="Rhea" id="RHEA:42928"/>
        <dbReference type="Rhea" id="RHEA-COMP:10286"/>
        <dbReference type="Rhea" id="RHEA-COMP:10287"/>
        <dbReference type="ChEBI" id="CHEBI:15378"/>
        <dbReference type="ChEBI" id="CHEBI:57856"/>
        <dbReference type="ChEBI" id="CHEBI:59789"/>
        <dbReference type="ChEBI" id="CHEBI:74506"/>
        <dbReference type="ChEBI" id="CHEBI:82748"/>
        <dbReference type="EC" id="2.1.1.199"/>
    </reaction>
</comment>
<comment type="subcellular location">
    <subcellularLocation>
        <location evidence="1">Cytoplasm</location>
    </subcellularLocation>
</comment>
<comment type="similarity">
    <text evidence="1">Belongs to the methyltransferase superfamily. RsmH family.</text>
</comment>
<feature type="chain" id="PRO_0000108612" description="Ribosomal RNA small subunit methyltransferase H">
    <location>
        <begin position="1"/>
        <end position="310"/>
    </location>
</feature>
<feature type="binding site" evidence="1">
    <location>
        <begin position="33"/>
        <end position="35"/>
    </location>
    <ligand>
        <name>S-adenosyl-L-methionine</name>
        <dbReference type="ChEBI" id="CHEBI:59789"/>
    </ligand>
</feature>
<feature type="binding site" evidence="1">
    <location>
        <position position="53"/>
    </location>
    <ligand>
        <name>S-adenosyl-L-methionine</name>
        <dbReference type="ChEBI" id="CHEBI:59789"/>
    </ligand>
</feature>
<feature type="binding site" evidence="1">
    <location>
        <position position="79"/>
    </location>
    <ligand>
        <name>S-adenosyl-L-methionine</name>
        <dbReference type="ChEBI" id="CHEBI:59789"/>
    </ligand>
</feature>
<feature type="binding site" evidence="1">
    <location>
        <position position="100"/>
    </location>
    <ligand>
        <name>S-adenosyl-L-methionine</name>
        <dbReference type="ChEBI" id="CHEBI:59789"/>
    </ligand>
</feature>
<feature type="binding site" evidence="1">
    <location>
        <position position="107"/>
    </location>
    <ligand>
        <name>S-adenosyl-L-methionine</name>
        <dbReference type="ChEBI" id="CHEBI:59789"/>
    </ligand>
</feature>
<name>RSMH_CLOTE</name>
<sequence>MEFKHISVLLDECIEGLNIKENGIYVDCTLGGAGHSSEILKNLSKEGKLIGIDQDEEALKAASEKLKEYENVLYKHSNFYHIKDILEELEVGKVDGILMDLGVSSYQLDEKSRGFSYMQNAPLDMRMNKKSSLDAYEVVNFYDESKLARIIKDYGEERFAKRISNFIVESRENKKIETTGELVDIIKRAIPAKFRREGPHPAKRTFQAIRIEVNGELEILNKAIEDSVKSLKSGGRIAIITFHSLEDRIVKNKFKELEDPCICPKDFPICTCGKEPLVKIITRKPIDPSKEEVEINPRSRSAKLRIAEKL</sequence>
<protein>
    <recommendedName>
        <fullName evidence="1">Ribosomal RNA small subunit methyltransferase H</fullName>
        <ecNumber evidence="1">2.1.1.199</ecNumber>
    </recommendedName>
    <alternativeName>
        <fullName evidence="1">16S rRNA m(4)C1402 methyltransferase</fullName>
    </alternativeName>
    <alternativeName>
        <fullName evidence="1">rRNA (cytosine-N(4)-)-methyltransferase RsmH</fullName>
    </alternativeName>
</protein>
<keyword id="KW-0963">Cytoplasm</keyword>
<keyword id="KW-0489">Methyltransferase</keyword>
<keyword id="KW-1185">Reference proteome</keyword>
<keyword id="KW-0698">rRNA processing</keyword>
<keyword id="KW-0949">S-adenosyl-L-methionine</keyword>
<keyword id="KW-0808">Transferase</keyword>
<accession>Q894B4</accession>
<reference key="1">
    <citation type="journal article" date="2003" name="Proc. Natl. Acad. Sci. U.S.A.">
        <title>The genome sequence of Clostridium tetani, the causative agent of tetanus disease.</title>
        <authorList>
            <person name="Brueggemann H."/>
            <person name="Baeumer S."/>
            <person name="Fricke W.F."/>
            <person name="Wiezer A."/>
            <person name="Liesegang H."/>
            <person name="Decker I."/>
            <person name="Herzberg C."/>
            <person name="Martinez-Arias R."/>
            <person name="Merkl R."/>
            <person name="Henne A."/>
            <person name="Gottschalk G."/>
        </authorList>
    </citation>
    <scope>NUCLEOTIDE SEQUENCE [LARGE SCALE GENOMIC DNA]</scope>
    <source>
        <strain>Massachusetts / E88</strain>
    </source>
</reference>